<protein>
    <recommendedName>
        <fullName evidence="1">Tyrosine--tRNA ligase</fullName>
        <ecNumber evidence="1">6.1.1.1</ecNumber>
    </recommendedName>
    <alternativeName>
        <fullName evidence="1">Tyrosyl-tRNA synthetase</fullName>
        <shortName evidence="1">TyrRS</shortName>
    </alternativeName>
</protein>
<accession>Q5FAF7</accession>
<feature type="chain" id="PRO_0000234739" description="Tyrosine--tRNA ligase">
    <location>
        <begin position="1"/>
        <end position="431"/>
    </location>
</feature>
<feature type="domain" description="S4 RNA-binding" evidence="1">
    <location>
        <begin position="353"/>
        <end position="422"/>
    </location>
</feature>
<feature type="short sequence motif" description="'HIGH' region">
    <location>
        <begin position="39"/>
        <end position="48"/>
    </location>
</feature>
<feature type="short sequence motif" description="'KMSKS' region">
    <location>
        <begin position="231"/>
        <end position="235"/>
    </location>
</feature>
<feature type="binding site" evidence="1">
    <location>
        <position position="34"/>
    </location>
    <ligand>
        <name>L-tyrosine</name>
        <dbReference type="ChEBI" id="CHEBI:58315"/>
    </ligand>
</feature>
<feature type="binding site" evidence="1">
    <location>
        <position position="171"/>
    </location>
    <ligand>
        <name>L-tyrosine</name>
        <dbReference type="ChEBI" id="CHEBI:58315"/>
    </ligand>
</feature>
<feature type="binding site" evidence="1">
    <location>
        <position position="175"/>
    </location>
    <ligand>
        <name>L-tyrosine</name>
        <dbReference type="ChEBI" id="CHEBI:58315"/>
    </ligand>
</feature>
<feature type="binding site" evidence="1">
    <location>
        <position position="234"/>
    </location>
    <ligand>
        <name>ATP</name>
        <dbReference type="ChEBI" id="CHEBI:30616"/>
    </ligand>
</feature>
<name>SYY_NEIG1</name>
<sequence length="431" mass="47182">MSVIQDLQSRGLIAQTTDIEALDALLNEQKIALYCGFDPTADSLHIGHLLPVLALRRFQQAGHTPIALVGGATGMIGDPSFKAAERSLNSAETVAGWVGSIRSQLTPFLSFEGGNAAIMANNADWFGSMNCLDFLRDIGKHFSVNAMLNKESVKQRIDRDGAGISFTEFAYSLLQGYDFAELNKRHGAVLEIGGSDQWGNITAGIDLTRRLNQKQVFGLTLPLVTKSDGTKFGKTEGGAVWLNAKKTSPYQFYQFWLKVADADVYKFLKYFTFLSIEEIGVVEAKDKASGSKPEAQRILAEEMTRLIHGEEALAAAQRISESLFAEDQSRLTESDFEQLALDGLPAFEVSDGINAVEALVKTGLAASNKEARGFVNAKAVLLNGKPAEANNPNHAAERPDDAYLLIGEYKRFGKYTILRRGKRNHALLVWK</sequence>
<gene>
    <name evidence="1" type="primary">tyrS</name>
    <name type="ordered locus">NGO_0066</name>
</gene>
<dbReference type="EC" id="6.1.1.1" evidence="1"/>
<dbReference type="EMBL" id="AE004969">
    <property type="protein sequence ID" value="AAW88830.1"/>
    <property type="molecule type" value="Genomic_DNA"/>
</dbReference>
<dbReference type="RefSeq" id="WP_003687313.1">
    <property type="nucleotide sequence ID" value="NC_002946.2"/>
</dbReference>
<dbReference type="RefSeq" id="YP_207242.1">
    <property type="nucleotide sequence ID" value="NC_002946.2"/>
</dbReference>
<dbReference type="SMR" id="Q5FAF7"/>
<dbReference type="STRING" id="242231.NGO_0066"/>
<dbReference type="KEGG" id="ngo:NGO_0066"/>
<dbReference type="PATRIC" id="fig|242231.10.peg.76"/>
<dbReference type="HOGENOM" id="CLU_024003_0_3_4"/>
<dbReference type="Proteomes" id="UP000000535">
    <property type="component" value="Chromosome"/>
</dbReference>
<dbReference type="GO" id="GO:0005829">
    <property type="term" value="C:cytosol"/>
    <property type="evidence" value="ECO:0007669"/>
    <property type="project" value="TreeGrafter"/>
</dbReference>
<dbReference type="GO" id="GO:0005524">
    <property type="term" value="F:ATP binding"/>
    <property type="evidence" value="ECO:0007669"/>
    <property type="project" value="UniProtKB-UniRule"/>
</dbReference>
<dbReference type="GO" id="GO:0003723">
    <property type="term" value="F:RNA binding"/>
    <property type="evidence" value="ECO:0007669"/>
    <property type="project" value="UniProtKB-KW"/>
</dbReference>
<dbReference type="GO" id="GO:0004831">
    <property type="term" value="F:tyrosine-tRNA ligase activity"/>
    <property type="evidence" value="ECO:0007669"/>
    <property type="project" value="UniProtKB-UniRule"/>
</dbReference>
<dbReference type="GO" id="GO:0006437">
    <property type="term" value="P:tyrosyl-tRNA aminoacylation"/>
    <property type="evidence" value="ECO:0007669"/>
    <property type="project" value="UniProtKB-UniRule"/>
</dbReference>
<dbReference type="CDD" id="cd00165">
    <property type="entry name" value="S4"/>
    <property type="match status" value="1"/>
</dbReference>
<dbReference type="CDD" id="cd00805">
    <property type="entry name" value="TyrRS_core"/>
    <property type="match status" value="1"/>
</dbReference>
<dbReference type="FunFam" id="1.10.240.10:FF:000001">
    <property type="entry name" value="Tyrosine--tRNA ligase"/>
    <property type="match status" value="1"/>
</dbReference>
<dbReference type="FunFam" id="3.10.290.10:FF:000027">
    <property type="entry name" value="Tyrosine--tRNA ligase"/>
    <property type="match status" value="1"/>
</dbReference>
<dbReference type="FunFam" id="3.40.50.620:FF:000008">
    <property type="entry name" value="Tyrosine--tRNA ligase"/>
    <property type="match status" value="1"/>
</dbReference>
<dbReference type="Gene3D" id="3.40.50.620">
    <property type="entry name" value="HUPs"/>
    <property type="match status" value="1"/>
</dbReference>
<dbReference type="Gene3D" id="3.10.290.10">
    <property type="entry name" value="RNA-binding S4 domain"/>
    <property type="match status" value="1"/>
</dbReference>
<dbReference type="Gene3D" id="1.10.240.10">
    <property type="entry name" value="Tyrosyl-Transfer RNA Synthetase"/>
    <property type="match status" value="1"/>
</dbReference>
<dbReference type="HAMAP" id="MF_02006">
    <property type="entry name" value="Tyr_tRNA_synth_type1"/>
    <property type="match status" value="1"/>
</dbReference>
<dbReference type="InterPro" id="IPR001412">
    <property type="entry name" value="aa-tRNA-synth_I_CS"/>
</dbReference>
<dbReference type="InterPro" id="IPR002305">
    <property type="entry name" value="aa-tRNA-synth_Ic"/>
</dbReference>
<dbReference type="InterPro" id="IPR014729">
    <property type="entry name" value="Rossmann-like_a/b/a_fold"/>
</dbReference>
<dbReference type="InterPro" id="IPR036986">
    <property type="entry name" value="S4_RNA-bd_sf"/>
</dbReference>
<dbReference type="InterPro" id="IPR054608">
    <property type="entry name" value="SYY-like_C"/>
</dbReference>
<dbReference type="InterPro" id="IPR002307">
    <property type="entry name" value="Tyr-tRNA-ligase"/>
</dbReference>
<dbReference type="InterPro" id="IPR024088">
    <property type="entry name" value="Tyr-tRNA-ligase_bac-type"/>
</dbReference>
<dbReference type="InterPro" id="IPR024107">
    <property type="entry name" value="Tyr-tRNA-ligase_bac_1"/>
</dbReference>
<dbReference type="NCBIfam" id="TIGR00234">
    <property type="entry name" value="tyrS"/>
    <property type="match status" value="1"/>
</dbReference>
<dbReference type="PANTHER" id="PTHR11766:SF0">
    <property type="entry name" value="TYROSINE--TRNA LIGASE, MITOCHONDRIAL"/>
    <property type="match status" value="1"/>
</dbReference>
<dbReference type="PANTHER" id="PTHR11766">
    <property type="entry name" value="TYROSYL-TRNA SYNTHETASE"/>
    <property type="match status" value="1"/>
</dbReference>
<dbReference type="Pfam" id="PF22421">
    <property type="entry name" value="SYY_C-terminal"/>
    <property type="match status" value="1"/>
</dbReference>
<dbReference type="Pfam" id="PF00579">
    <property type="entry name" value="tRNA-synt_1b"/>
    <property type="match status" value="1"/>
</dbReference>
<dbReference type="PRINTS" id="PR01040">
    <property type="entry name" value="TRNASYNTHTYR"/>
</dbReference>
<dbReference type="SUPFAM" id="SSF55174">
    <property type="entry name" value="Alpha-L RNA-binding motif"/>
    <property type="match status" value="1"/>
</dbReference>
<dbReference type="SUPFAM" id="SSF52374">
    <property type="entry name" value="Nucleotidylyl transferase"/>
    <property type="match status" value="1"/>
</dbReference>
<dbReference type="PROSITE" id="PS00178">
    <property type="entry name" value="AA_TRNA_LIGASE_I"/>
    <property type="match status" value="1"/>
</dbReference>
<dbReference type="PROSITE" id="PS50889">
    <property type="entry name" value="S4"/>
    <property type="match status" value="1"/>
</dbReference>
<evidence type="ECO:0000255" key="1">
    <source>
        <dbReference type="HAMAP-Rule" id="MF_02006"/>
    </source>
</evidence>
<organism>
    <name type="scientific">Neisseria gonorrhoeae (strain ATCC 700825 / FA 1090)</name>
    <dbReference type="NCBI Taxonomy" id="242231"/>
    <lineage>
        <taxon>Bacteria</taxon>
        <taxon>Pseudomonadati</taxon>
        <taxon>Pseudomonadota</taxon>
        <taxon>Betaproteobacteria</taxon>
        <taxon>Neisseriales</taxon>
        <taxon>Neisseriaceae</taxon>
        <taxon>Neisseria</taxon>
    </lineage>
</organism>
<proteinExistence type="inferred from homology"/>
<keyword id="KW-0030">Aminoacyl-tRNA synthetase</keyword>
<keyword id="KW-0067">ATP-binding</keyword>
<keyword id="KW-0963">Cytoplasm</keyword>
<keyword id="KW-0436">Ligase</keyword>
<keyword id="KW-0547">Nucleotide-binding</keyword>
<keyword id="KW-0648">Protein biosynthesis</keyword>
<keyword id="KW-1185">Reference proteome</keyword>
<keyword id="KW-0694">RNA-binding</keyword>
<reference key="1">
    <citation type="submission" date="2003-03" db="EMBL/GenBank/DDBJ databases">
        <title>The complete genome sequence of Neisseria gonorrhoeae.</title>
        <authorList>
            <person name="Lewis L.A."/>
            <person name="Gillaspy A.F."/>
            <person name="McLaughlin R.E."/>
            <person name="Gipson M."/>
            <person name="Ducey T.F."/>
            <person name="Ownbey T."/>
            <person name="Hartman K."/>
            <person name="Nydick C."/>
            <person name="Carson M.B."/>
            <person name="Vaughn J."/>
            <person name="Thomson C."/>
            <person name="Song L."/>
            <person name="Lin S."/>
            <person name="Yuan X."/>
            <person name="Najar F."/>
            <person name="Zhan M."/>
            <person name="Ren Q."/>
            <person name="Zhu H."/>
            <person name="Qi S."/>
            <person name="Kenton S.M."/>
            <person name="Lai H."/>
            <person name="White J.D."/>
            <person name="Clifton S."/>
            <person name="Roe B.A."/>
            <person name="Dyer D.W."/>
        </authorList>
    </citation>
    <scope>NUCLEOTIDE SEQUENCE [LARGE SCALE GENOMIC DNA]</scope>
    <source>
        <strain>ATCC 700825 / FA 1090</strain>
    </source>
</reference>
<comment type="function">
    <text evidence="1">Catalyzes the attachment of tyrosine to tRNA(Tyr) in a two-step reaction: tyrosine is first activated by ATP to form Tyr-AMP and then transferred to the acceptor end of tRNA(Tyr).</text>
</comment>
<comment type="catalytic activity">
    <reaction evidence="1">
        <text>tRNA(Tyr) + L-tyrosine + ATP = L-tyrosyl-tRNA(Tyr) + AMP + diphosphate + H(+)</text>
        <dbReference type="Rhea" id="RHEA:10220"/>
        <dbReference type="Rhea" id="RHEA-COMP:9706"/>
        <dbReference type="Rhea" id="RHEA-COMP:9707"/>
        <dbReference type="ChEBI" id="CHEBI:15378"/>
        <dbReference type="ChEBI" id="CHEBI:30616"/>
        <dbReference type="ChEBI" id="CHEBI:33019"/>
        <dbReference type="ChEBI" id="CHEBI:58315"/>
        <dbReference type="ChEBI" id="CHEBI:78442"/>
        <dbReference type="ChEBI" id="CHEBI:78536"/>
        <dbReference type="ChEBI" id="CHEBI:456215"/>
        <dbReference type="EC" id="6.1.1.1"/>
    </reaction>
</comment>
<comment type="subunit">
    <text evidence="1">Homodimer.</text>
</comment>
<comment type="subcellular location">
    <subcellularLocation>
        <location evidence="1">Cytoplasm</location>
    </subcellularLocation>
</comment>
<comment type="similarity">
    <text evidence="1">Belongs to the class-I aminoacyl-tRNA synthetase family. TyrS type 1 subfamily.</text>
</comment>